<feature type="chain" id="PRO_0000124562" description="Autophagy-related protein 17">
    <location>
        <begin position="1"/>
        <end position="504"/>
    </location>
</feature>
<accession>Q51Y68</accession>
<accession>A4RAJ2</accession>
<accession>G4N3B8</accession>
<sequence>MPSSSSARSSQSLRSSAAAAVSTSSGAADQPSVPIEILVEHLLAAKRSLSSMTLVLEANDLTTQARSVHEDSVVLAARTAFLRAGIAQQIHTLERIRRGLARTYDVGRRDFEQLIKVLDDAGERLTRTMNVLHNTIVDPVFRPAGEEPRSLMFFVDEGNVDRLTKSLKESIAELKAAETSYDGDLLRFDNDIRSVKKHLLAAPGLPSPSNSVFSRPMADLVRTLTNHSHAMAENLSSLTRHFDLCVTAVRASEGGAALALRKAAEDGPSTISISGVIRGDGTDADDQDIKTMSARERDEMLRVVMQDATEVGEVVRDINSGLEEMQALGALVEQQAAHVRTAHECTLDAFRRLEEVEARLGSYVAAEREYVDRCEVEKDAIHERLAQAEDLVVFYEGYAGAYDGLVLEYERRRNVEDKIRALWRKAAAAVEKLEEQDAAARDSMRKDVGDYIPGDLWVGMDDPVRKWKVVAVDEGEGGSGEIEGSSVRLKKGTVEAARERVHGR</sequence>
<evidence type="ECO:0000250" key="1"/>
<evidence type="ECO:0000305" key="2"/>
<organism>
    <name type="scientific">Pyricularia oryzae (strain 70-15 / ATCC MYA-4617 / FGSC 8958)</name>
    <name type="common">Rice blast fungus</name>
    <name type="synonym">Magnaporthe oryzae</name>
    <dbReference type="NCBI Taxonomy" id="242507"/>
    <lineage>
        <taxon>Eukaryota</taxon>
        <taxon>Fungi</taxon>
        <taxon>Dikarya</taxon>
        <taxon>Ascomycota</taxon>
        <taxon>Pezizomycotina</taxon>
        <taxon>Sordariomycetes</taxon>
        <taxon>Sordariomycetidae</taxon>
        <taxon>Magnaporthales</taxon>
        <taxon>Pyriculariaceae</taxon>
        <taxon>Pyricularia</taxon>
    </lineage>
</organism>
<reference key="1">
    <citation type="journal article" date="2005" name="Nature">
        <title>The genome sequence of the rice blast fungus Magnaporthe grisea.</title>
        <authorList>
            <person name="Dean R.A."/>
            <person name="Talbot N.J."/>
            <person name="Ebbole D.J."/>
            <person name="Farman M.L."/>
            <person name="Mitchell T.K."/>
            <person name="Orbach M.J."/>
            <person name="Thon M.R."/>
            <person name="Kulkarni R."/>
            <person name="Xu J.-R."/>
            <person name="Pan H."/>
            <person name="Read N.D."/>
            <person name="Lee Y.-H."/>
            <person name="Carbone I."/>
            <person name="Brown D."/>
            <person name="Oh Y.Y."/>
            <person name="Donofrio N."/>
            <person name="Jeong J.S."/>
            <person name="Soanes D.M."/>
            <person name="Djonovic S."/>
            <person name="Kolomiets E."/>
            <person name="Rehmeyer C."/>
            <person name="Li W."/>
            <person name="Harding M."/>
            <person name="Kim S."/>
            <person name="Lebrun M.-H."/>
            <person name="Bohnert H."/>
            <person name="Coughlan S."/>
            <person name="Butler J."/>
            <person name="Calvo S.E."/>
            <person name="Ma L.-J."/>
            <person name="Nicol R."/>
            <person name="Purcell S."/>
            <person name="Nusbaum C."/>
            <person name="Galagan J.E."/>
            <person name="Birren B.W."/>
        </authorList>
    </citation>
    <scope>NUCLEOTIDE SEQUENCE [LARGE SCALE GENOMIC DNA]</scope>
    <source>
        <strain>70-15 / ATCC MYA-4617 / FGSC 8958</strain>
    </source>
</reference>
<protein>
    <recommendedName>
        <fullName>Autophagy-related protein 17</fullName>
    </recommendedName>
</protein>
<keyword id="KW-0072">Autophagy</keyword>
<keyword id="KW-0963">Cytoplasm</keyword>
<keyword id="KW-0472">Membrane</keyword>
<keyword id="KW-1185">Reference proteome</keyword>
<proteinExistence type="inferred from homology"/>
<name>ATG17_PYRO7</name>
<gene>
    <name type="primary">ATG17</name>
    <name type="ORF">MGG_07667</name>
</gene>
<dbReference type="EMBL" id="CM001233">
    <property type="protein sequence ID" value="EHA51796.1"/>
    <property type="molecule type" value="Genomic_DNA"/>
</dbReference>
<dbReference type="RefSeq" id="XP_003711603.1">
    <property type="nucleotide sequence ID" value="XM_003711555.1"/>
</dbReference>
<dbReference type="SMR" id="Q51Y68"/>
<dbReference type="FunCoup" id="Q51Y68">
    <property type="interactions" value="138"/>
</dbReference>
<dbReference type="STRING" id="242507.Q51Y68"/>
<dbReference type="EnsemblFungi" id="MGG_07667T0">
    <property type="protein sequence ID" value="MGG_07667T0"/>
    <property type="gene ID" value="MGG_07667"/>
</dbReference>
<dbReference type="GeneID" id="2683587"/>
<dbReference type="KEGG" id="mgr:MGG_07667"/>
<dbReference type="VEuPathDB" id="FungiDB:MGG_07667"/>
<dbReference type="eggNOG" id="ENOG502SAME">
    <property type="taxonomic scope" value="Eukaryota"/>
</dbReference>
<dbReference type="HOGENOM" id="CLU_028356_0_0_1"/>
<dbReference type="InParanoid" id="Q51Y68"/>
<dbReference type="OMA" id="THVWRAN"/>
<dbReference type="OrthoDB" id="1937984at2759"/>
<dbReference type="PHI-base" id="PHI:11535"/>
<dbReference type="PHI-base" id="PHI:2083"/>
<dbReference type="Proteomes" id="UP000009058">
    <property type="component" value="Chromosome 3"/>
</dbReference>
<dbReference type="GO" id="GO:1990316">
    <property type="term" value="C:Atg1/ULK1 kinase complex"/>
    <property type="evidence" value="ECO:0007669"/>
    <property type="project" value="TreeGrafter"/>
</dbReference>
<dbReference type="GO" id="GO:0034045">
    <property type="term" value="C:phagophore assembly site membrane"/>
    <property type="evidence" value="ECO:0007669"/>
    <property type="project" value="UniProtKB-SubCell"/>
</dbReference>
<dbReference type="GO" id="GO:0060090">
    <property type="term" value="F:molecular adaptor activity"/>
    <property type="evidence" value="ECO:0007669"/>
    <property type="project" value="TreeGrafter"/>
</dbReference>
<dbReference type="GO" id="GO:0030295">
    <property type="term" value="F:protein kinase activator activity"/>
    <property type="evidence" value="ECO:0007669"/>
    <property type="project" value="TreeGrafter"/>
</dbReference>
<dbReference type="GO" id="GO:0000045">
    <property type="term" value="P:autophagosome assembly"/>
    <property type="evidence" value="ECO:0007669"/>
    <property type="project" value="TreeGrafter"/>
</dbReference>
<dbReference type="GO" id="GO:0000422">
    <property type="term" value="P:autophagy of mitochondrion"/>
    <property type="evidence" value="ECO:0007669"/>
    <property type="project" value="TreeGrafter"/>
</dbReference>
<dbReference type="GO" id="GO:0034727">
    <property type="term" value="P:piecemeal microautophagy of the nucleus"/>
    <property type="evidence" value="ECO:0007669"/>
    <property type="project" value="TreeGrafter"/>
</dbReference>
<dbReference type="InterPro" id="IPR007240">
    <property type="entry name" value="Atg17"/>
</dbReference>
<dbReference type="InterPro" id="IPR045326">
    <property type="entry name" value="ATG17-like_dom"/>
</dbReference>
<dbReference type="PANTHER" id="PTHR28005">
    <property type="entry name" value="AUTOPHAGY-RELATED PROTEIN 17"/>
    <property type="match status" value="1"/>
</dbReference>
<dbReference type="PANTHER" id="PTHR28005:SF1">
    <property type="entry name" value="AUTOPHAGY-RELATED PROTEIN 17"/>
    <property type="match status" value="1"/>
</dbReference>
<dbReference type="Pfam" id="PF04108">
    <property type="entry name" value="ATG17_like"/>
    <property type="match status" value="1"/>
</dbReference>
<comment type="function">
    <text evidence="1">Autophagy-specific protein that functions in response to autophagy-inducing signals as a scaffold to recruit other ATG proteins to organize pre-autophagosomal structure (PAS) formation. Modulates the timing and magnitude of the autophagy response, such as the size of the sequestering vesicles. Plays particularly a role in pexophagy and nucleophagy (By similarity).</text>
</comment>
<comment type="subcellular location">
    <subcellularLocation>
        <location evidence="1">Cytoplasm</location>
    </subcellularLocation>
    <subcellularLocation>
        <location evidence="1">Preautophagosomal structure membrane</location>
        <topology evidence="1">Peripheral membrane protein</topology>
    </subcellularLocation>
</comment>
<comment type="similarity">
    <text evidence="2">Belongs to the ATG17 family.</text>
</comment>